<gene>
    <name evidence="1" type="primary">ravA</name>
    <name type="ordered locus">SeHA_C4212</name>
</gene>
<protein>
    <recommendedName>
        <fullName evidence="1">Regulatory ATPase RavA</fullName>
        <ecNumber evidence="1">3.6.1.-</ecNumber>
    </recommendedName>
    <alternativeName>
        <fullName evidence="1">Regulatory ATPase variant A</fullName>
    </alternativeName>
</protein>
<accession>B4TAY8</accession>
<name>RAVA_SALHS</name>
<proteinExistence type="inferred from homology"/>
<organism>
    <name type="scientific">Salmonella heidelberg (strain SL476)</name>
    <dbReference type="NCBI Taxonomy" id="454169"/>
    <lineage>
        <taxon>Bacteria</taxon>
        <taxon>Pseudomonadati</taxon>
        <taxon>Pseudomonadota</taxon>
        <taxon>Gammaproteobacteria</taxon>
        <taxon>Enterobacterales</taxon>
        <taxon>Enterobacteriaceae</taxon>
        <taxon>Salmonella</taxon>
    </lineage>
</organism>
<feature type="chain" id="PRO_1000186133" description="Regulatory ATPase RavA">
    <location>
        <begin position="1"/>
        <end position="498"/>
    </location>
</feature>
<feature type="binding site" evidence="1">
    <location>
        <position position="23"/>
    </location>
    <ligand>
        <name>ADP</name>
        <dbReference type="ChEBI" id="CHEBI:456216"/>
    </ligand>
</feature>
<feature type="binding site" evidence="1">
    <location>
        <position position="49"/>
    </location>
    <ligand>
        <name>ADP</name>
        <dbReference type="ChEBI" id="CHEBI:456216"/>
    </ligand>
</feature>
<feature type="binding site" evidence="1">
    <location>
        <position position="50"/>
    </location>
    <ligand>
        <name>ADP</name>
        <dbReference type="ChEBI" id="CHEBI:456216"/>
    </ligand>
</feature>
<feature type="binding site" evidence="1">
    <location>
        <position position="51"/>
    </location>
    <ligand>
        <name>ADP</name>
        <dbReference type="ChEBI" id="CHEBI:456216"/>
    </ligand>
</feature>
<feature type="binding site" evidence="1">
    <location>
        <position position="52"/>
    </location>
    <ligand>
        <name>ADP</name>
        <dbReference type="ChEBI" id="CHEBI:456216"/>
    </ligand>
</feature>
<feature type="binding site" evidence="1">
    <location>
        <position position="53"/>
    </location>
    <ligand>
        <name>ADP</name>
        <dbReference type="ChEBI" id="CHEBI:456216"/>
    </ligand>
</feature>
<feature type="binding site" evidence="1">
    <location>
        <position position="54"/>
    </location>
    <ligand>
        <name>ADP</name>
        <dbReference type="ChEBI" id="CHEBI:456216"/>
    </ligand>
</feature>
<feature type="binding site" evidence="1">
    <location>
        <position position="196"/>
    </location>
    <ligand>
        <name>ADP</name>
        <dbReference type="ChEBI" id="CHEBI:456216"/>
    </ligand>
</feature>
<dbReference type="EC" id="3.6.1.-" evidence="1"/>
<dbReference type="EMBL" id="CP001120">
    <property type="protein sequence ID" value="ACF67891.1"/>
    <property type="molecule type" value="Genomic_DNA"/>
</dbReference>
<dbReference type="RefSeq" id="WP_000940987.1">
    <property type="nucleotide sequence ID" value="NC_011083.1"/>
</dbReference>
<dbReference type="SMR" id="B4TAY8"/>
<dbReference type="KEGG" id="seh:SeHA_C4212"/>
<dbReference type="HOGENOM" id="CLU_018678_1_0_6"/>
<dbReference type="Proteomes" id="UP000001866">
    <property type="component" value="Chromosome"/>
</dbReference>
<dbReference type="GO" id="GO:0005737">
    <property type="term" value="C:cytoplasm"/>
    <property type="evidence" value="ECO:0007669"/>
    <property type="project" value="UniProtKB-SubCell"/>
</dbReference>
<dbReference type="GO" id="GO:0005524">
    <property type="term" value="F:ATP binding"/>
    <property type="evidence" value="ECO:0007669"/>
    <property type="project" value="UniProtKB-KW"/>
</dbReference>
<dbReference type="GO" id="GO:0016887">
    <property type="term" value="F:ATP hydrolysis activity"/>
    <property type="evidence" value="ECO:0007669"/>
    <property type="project" value="UniProtKB-UniRule"/>
</dbReference>
<dbReference type="CDD" id="cd00009">
    <property type="entry name" value="AAA"/>
    <property type="match status" value="1"/>
</dbReference>
<dbReference type="FunFam" id="3.40.50.300:FF:000410">
    <property type="entry name" value="ATPase RavA"/>
    <property type="match status" value="1"/>
</dbReference>
<dbReference type="Gene3D" id="1.20.58.1510">
    <property type="match status" value="1"/>
</dbReference>
<dbReference type="Gene3D" id="2.40.128.430">
    <property type="match status" value="1"/>
</dbReference>
<dbReference type="Gene3D" id="3.40.50.300">
    <property type="entry name" value="P-loop containing nucleotide triphosphate hydrolases"/>
    <property type="match status" value="1"/>
</dbReference>
<dbReference type="HAMAP" id="MF_01625">
    <property type="entry name" value="ATPase_RavA"/>
    <property type="match status" value="1"/>
</dbReference>
<dbReference type="InterPro" id="IPR003593">
    <property type="entry name" value="AAA+_ATPase"/>
</dbReference>
<dbReference type="InterPro" id="IPR023671">
    <property type="entry name" value="ATPase_RavA"/>
</dbReference>
<dbReference type="InterPro" id="IPR022547">
    <property type="entry name" value="ATPase_RavA_C"/>
</dbReference>
<dbReference type="InterPro" id="IPR045427">
    <property type="entry name" value="MoxR"/>
</dbReference>
<dbReference type="InterPro" id="IPR027417">
    <property type="entry name" value="P-loop_NTPase"/>
</dbReference>
<dbReference type="InterPro" id="IPR041538">
    <property type="entry name" value="RavA-like_AAA_lid"/>
</dbReference>
<dbReference type="InterPro" id="IPR050513">
    <property type="entry name" value="RavA_ATPases"/>
</dbReference>
<dbReference type="InterPro" id="IPR046898">
    <property type="entry name" value="RavA_LARA_dom"/>
</dbReference>
<dbReference type="InterPro" id="IPR046932">
    <property type="entry name" value="RavA_LARA_sf"/>
</dbReference>
<dbReference type="NCBIfam" id="NF010054">
    <property type="entry name" value="PRK13531.1"/>
    <property type="match status" value="1"/>
</dbReference>
<dbReference type="PANTHER" id="PTHR32204">
    <property type="entry name" value="ATPASE RAVA"/>
    <property type="match status" value="1"/>
</dbReference>
<dbReference type="PANTHER" id="PTHR32204:SF0">
    <property type="entry name" value="ATPASE RAVA"/>
    <property type="match status" value="1"/>
</dbReference>
<dbReference type="Pfam" id="PF17868">
    <property type="entry name" value="AAA_lid_8"/>
    <property type="match status" value="1"/>
</dbReference>
<dbReference type="Pfam" id="PF12592">
    <property type="entry name" value="ATPase_RavA_C"/>
    <property type="match status" value="1"/>
</dbReference>
<dbReference type="Pfam" id="PF20030">
    <property type="entry name" value="bpMoxR"/>
    <property type="match status" value="1"/>
</dbReference>
<dbReference type="Pfam" id="PF20265">
    <property type="entry name" value="LARA_dom"/>
    <property type="match status" value="1"/>
</dbReference>
<dbReference type="SMART" id="SM00382">
    <property type="entry name" value="AAA"/>
    <property type="match status" value="1"/>
</dbReference>
<dbReference type="SUPFAM" id="SSF52540">
    <property type="entry name" value="P-loop containing nucleoside triphosphate hydrolases"/>
    <property type="match status" value="1"/>
</dbReference>
<sequence length="498" mass="56673">MAHPHLLAERISRLSSALEKGLYERSHAIRLCLLAALSGESVFLLGPPGIAKSLIARRLKFAFQRARAFEYLMTRFSTPEEVFGPLSIQALKDEGRYERLTTGYLPEAEIVFLDEIWKAGPAILNTLLTAINERHFRNGAFEEKIPMRLLVAASNELPEADSSLEALYDRMLIRLWLDKVQDKANFRSMLVSQQDESDNPVPASLQVSDEEYQQWQKDIGAISLPDPVFELIFTLRQQLDNLPNAPYVSDRRWKKAIRLLQASAFFSGRDAVAPIDLILLKDCLWYDAQSLNLMQQQLEILMTGHAWQQQAMLTRLGGIVQRRLQLQQQQSDKTAFTVIKEGGMFSRRPHYTLPPEASASTLTLLLQKPLKLHDMEVIHITFDRSALELWLTKGGEIRGKLNGIGFAQTLNMEVDNAQHLVVRDISLQGTRLALPGAAEDSMPAEIKQQLETLENDWRQQHTRFSEQQHCLFIHSDWLGRIEASLQDVGEQIRQAQQC</sequence>
<comment type="function">
    <text evidence="1">Component of the RavA-ViaA chaperone complex, which may act on the membrane to optimize the function of some of the respiratory chains. RavA functions as an ATPase.</text>
</comment>
<comment type="catalytic activity">
    <reaction evidence="1">
        <text>ATP + H2O = ADP + phosphate + H(+)</text>
        <dbReference type="Rhea" id="RHEA:13065"/>
        <dbReference type="ChEBI" id="CHEBI:15377"/>
        <dbReference type="ChEBI" id="CHEBI:15378"/>
        <dbReference type="ChEBI" id="CHEBI:30616"/>
        <dbReference type="ChEBI" id="CHEBI:43474"/>
        <dbReference type="ChEBI" id="CHEBI:456216"/>
    </reaction>
</comment>
<comment type="activity regulation">
    <text evidence="1">ATPase activity is stimulated by ViaA.</text>
</comment>
<comment type="subunit">
    <text evidence="1">Homohexamer. Interacts with ViaA.</text>
</comment>
<comment type="subcellular location">
    <subcellularLocation>
        <location evidence="1">Cytoplasm</location>
    </subcellularLocation>
</comment>
<comment type="similarity">
    <text evidence="1">Belongs to the RavA family.</text>
</comment>
<reference key="1">
    <citation type="journal article" date="2011" name="J. Bacteriol.">
        <title>Comparative genomics of 28 Salmonella enterica isolates: evidence for CRISPR-mediated adaptive sublineage evolution.</title>
        <authorList>
            <person name="Fricke W.F."/>
            <person name="Mammel M.K."/>
            <person name="McDermott P.F."/>
            <person name="Tartera C."/>
            <person name="White D.G."/>
            <person name="Leclerc J.E."/>
            <person name="Ravel J."/>
            <person name="Cebula T.A."/>
        </authorList>
    </citation>
    <scope>NUCLEOTIDE SEQUENCE [LARGE SCALE GENOMIC DNA]</scope>
    <source>
        <strain>SL476</strain>
    </source>
</reference>
<keyword id="KW-0067">ATP-binding</keyword>
<keyword id="KW-0143">Chaperone</keyword>
<keyword id="KW-0963">Cytoplasm</keyword>
<keyword id="KW-0378">Hydrolase</keyword>
<keyword id="KW-0547">Nucleotide-binding</keyword>
<evidence type="ECO:0000255" key="1">
    <source>
        <dbReference type="HAMAP-Rule" id="MF_01625"/>
    </source>
</evidence>